<gene>
    <name type="primary">bpa</name>
    <name type="ordered locus">ML0115</name>
</gene>
<proteinExistence type="inferred from homology"/>
<feature type="chain" id="PRO_0000104147" description="Bacterial proteasome activator">
    <location>
        <begin position="1"/>
        <end position="174"/>
    </location>
</feature>
<feature type="region of interest" description="Disordered" evidence="2">
    <location>
        <begin position="1"/>
        <end position="37"/>
    </location>
</feature>
<feature type="region of interest" description="Disordered" evidence="2">
    <location>
        <begin position="153"/>
        <end position="174"/>
    </location>
</feature>
<feature type="short sequence motif" description="HbYX motif" evidence="1">
    <location>
        <begin position="172"/>
        <end position="174"/>
    </location>
</feature>
<feature type="compositionally biased region" description="Gly residues" evidence="2">
    <location>
        <begin position="160"/>
        <end position="174"/>
    </location>
</feature>
<organism>
    <name type="scientific">Mycobacterium leprae (strain TN)</name>
    <dbReference type="NCBI Taxonomy" id="272631"/>
    <lineage>
        <taxon>Bacteria</taxon>
        <taxon>Bacillati</taxon>
        <taxon>Actinomycetota</taxon>
        <taxon>Actinomycetes</taxon>
        <taxon>Mycobacteriales</taxon>
        <taxon>Mycobacteriaceae</taxon>
        <taxon>Mycobacterium</taxon>
    </lineage>
</organism>
<accession>Q9CD99</accession>
<comment type="function">
    <text evidence="1">Interacts with the core proteasome alpha-subunit (PrcA) through its C-terminal hydrophobic-tyrosine-X motif (HbYX motif). Interaction of Bpa with the proteasome stimulates proteasomal peptidase and casein degradation activity, which suggests Bpa could play a role in the removal of non-native or damaged proteins by influencing the conformation of the proteasome complex upon interaction.</text>
</comment>
<comment type="subunit">
    <text evidence="1">Forms a homooligomeric, either hexameric or heptameric, ring-like structure which stacks co-axially with the proteasomal alpha-rings.</text>
</comment>
<comment type="similarity">
    <text evidence="3">Belongs to the Bpa family.</text>
</comment>
<sequence length="174" mass="19071">MNNDNDDSIEIIGGVDPRTMATRGEDESRDSDEPSLTDLVEQPAKVMRIGTMIKQLLEEVRAAPLDEASRNQLREIHATSIRELEDGLAPELREELDRLTLPFNESTAPSNAELRIAQAQLVGWLEGLFHGIQTALFAQQMAARAQLEQMRHSALPPGMGKPGQAGGQGTGQYL</sequence>
<name>BPA_MYCLE</name>
<protein>
    <recommendedName>
        <fullName evidence="1">Bacterial proteasome activator</fullName>
    </recommendedName>
</protein>
<reference key="1">
    <citation type="journal article" date="2001" name="Nature">
        <title>Massive gene decay in the leprosy bacillus.</title>
        <authorList>
            <person name="Cole S.T."/>
            <person name="Eiglmeier K."/>
            <person name="Parkhill J."/>
            <person name="James K.D."/>
            <person name="Thomson N.R."/>
            <person name="Wheeler P.R."/>
            <person name="Honore N."/>
            <person name="Garnier T."/>
            <person name="Churcher C.M."/>
            <person name="Harris D.E."/>
            <person name="Mungall K.L."/>
            <person name="Basham D."/>
            <person name="Brown D."/>
            <person name="Chillingworth T."/>
            <person name="Connor R."/>
            <person name="Davies R.M."/>
            <person name="Devlin K."/>
            <person name="Duthoy S."/>
            <person name="Feltwell T."/>
            <person name="Fraser A."/>
            <person name="Hamlin N."/>
            <person name="Holroyd S."/>
            <person name="Hornsby T."/>
            <person name="Jagels K."/>
            <person name="Lacroix C."/>
            <person name="Maclean J."/>
            <person name="Moule S."/>
            <person name="Murphy L.D."/>
            <person name="Oliver K."/>
            <person name="Quail M.A."/>
            <person name="Rajandream M.A."/>
            <person name="Rutherford K.M."/>
            <person name="Rutter S."/>
            <person name="Seeger K."/>
            <person name="Simon S."/>
            <person name="Simmonds M."/>
            <person name="Skelton J."/>
            <person name="Squares R."/>
            <person name="Squares S."/>
            <person name="Stevens K."/>
            <person name="Taylor K."/>
            <person name="Whitehead S."/>
            <person name="Woodward J.R."/>
            <person name="Barrell B.G."/>
        </authorList>
    </citation>
    <scope>NUCLEOTIDE SEQUENCE [LARGE SCALE GENOMIC DNA]</scope>
    <source>
        <strain>TN</strain>
    </source>
</reference>
<dbReference type="EMBL" id="AL583917">
    <property type="protein sequence ID" value="CAC29623.1"/>
    <property type="molecule type" value="Genomic_DNA"/>
</dbReference>
<dbReference type="PIR" id="C86923">
    <property type="entry name" value="C86923"/>
</dbReference>
<dbReference type="RefSeq" id="NP_301211.1">
    <property type="nucleotide sequence ID" value="NC_002677.1"/>
</dbReference>
<dbReference type="SMR" id="Q9CD99"/>
<dbReference type="STRING" id="272631.gene:17573927"/>
<dbReference type="KEGG" id="mle:ML0115"/>
<dbReference type="PATRIC" id="fig|272631.5.peg.179"/>
<dbReference type="Leproma" id="ML0115"/>
<dbReference type="eggNOG" id="ENOG502ZPJ4">
    <property type="taxonomic scope" value="Bacteria"/>
</dbReference>
<dbReference type="HOGENOM" id="CLU_111456_0_0_11"/>
<dbReference type="OrthoDB" id="5189298at2"/>
<dbReference type="Proteomes" id="UP000000806">
    <property type="component" value="Chromosome"/>
</dbReference>
<dbReference type="GO" id="GO:0000502">
    <property type="term" value="C:proteasome complex"/>
    <property type="evidence" value="ECO:0007669"/>
    <property type="project" value="UniProtKB-KW"/>
</dbReference>
<dbReference type="GO" id="GO:0061136">
    <property type="term" value="P:regulation of proteasomal protein catabolic process"/>
    <property type="evidence" value="ECO:0007669"/>
    <property type="project" value="InterPro"/>
</dbReference>
<dbReference type="InterPro" id="IPR019695">
    <property type="entry name" value="Proteasome_act"/>
</dbReference>
<dbReference type="Pfam" id="PF10759">
    <property type="entry name" value="BPA"/>
    <property type="match status" value="1"/>
</dbReference>
<evidence type="ECO:0000250" key="1">
    <source>
        <dbReference type="UniProtKB" id="P9WKX3"/>
    </source>
</evidence>
<evidence type="ECO:0000256" key="2">
    <source>
        <dbReference type="SAM" id="MobiDB-lite"/>
    </source>
</evidence>
<evidence type="ECO:0000305" key="3"/>
<keyword id="KW-0647">Proteasome</keyword>
<keyword id="KW-1185">Reference proteome</keyword>